<sequence>MAGHSKWANTRHRKAAQDAKRGKIFTKIIRELVTAAKLGGGDPDANPRLRAAVDKALSNNMTRDTLNRAIARGVGGDDDANMETIIYEGYGPGGTAIMVECLSDNRNRTVAEVRHAFSKCGGNLGTDGSVAYLFSKKGVISFEKGDEDTIMEAALEAGAEDVVTYDDGAIDVYTAWEEMGKVRDALENAGLKADSAEVSMIPSTKADMDAETAPKLLRLIDMLEDCDDVQEVYHNGEISDEVAATLE</sequence>
<keyword id="KW-0963">Cytoplasm</keyword>
<keyword id="KW-0238">DNA-binding</keyword>
<keyword id="KW-1185">Reference proteome</keyword>
<keyword id="KW-0804">Transcription</keyword>
<keyword id="KW-0805">Transcription regulation</keyword>
<evidence type="ECO:0000255" key="1">
    <source>
        <dbReference type="HAMAP-Rule" id="MF_00693"/>
    </source>
</evidence>
<evidence type="ECO:0000256" key="2">
    <source>
        <dbReference type="SAM" id="MobiDB-lite"/>
    </source>
</evidence>
<accession>A9MND4</accession>
<gene>
    <name evidence="1" type="primary">yebC</name>
    <name type="ordered locus">SARI_01049</name>
</gene>
<feature type="chain" id="PRO_1000083169" description="Probable transcriptional regulatory protein YebC">
    <location>
        <begin position="1"/>
        <end position="247"/>
    </location>
</feature>
<feature type="region of interest" description="Disordered" evidence="2">
    <location>
        <begin position="1"/>
        <end position="20"/>
    </location>
</feature>
<organism>
    <name type="scientific">Salmonella arizonae (strain ATCC BAA-731 / CDC346-86 / RSK2980)</name>
    <dbReference type="NCBI Taxonomy" id="41514"/>
    <lineage>
        <taxon>Bacteria</taxon>
        <taxon>Pseudomonadati</taxon>
        <taxon>Pseudomonadota</taxon>
        <taxon>Gammaproteobacteria</taxon>
        <taxon>Enterobacterales</taxon>
        <taxon>Enterobacteriaceae</taxon>
        <taxon>Salmonella</taxon>
    </lineage>
</organism>
<comment type="subcellular location">
    <subcellularLocation>
        <location evidence="1">Cytoplasm</location>
    </subcellularLocation>
</comment>
<comment type="similarity">
    <text evidence="1">Belongs to the TACO1 family.</text>
</comment>
<reference key="1">
    <citation type="submission" date="2007-11" db="EMBL/GenBank/DDBJ databases">
        <authorList>
            <consortium name="The Salmonella enterica serovar Arizonae Genome Sequencing Project"/>
            <person name="McClelland M."/>
            <person name="Sanderson E.K."/>
            <person name="Porwollik S."/>
            <person name="Spieth J."/>
            <person name="Clifton W.S."/>
            <person name="Fulton R."/>
            <person name="Chunyan W."/>
            <person name="Wollam A."/>
            <person name="Shah N."/>
            <person name="Pepin K."/>
            <person name="Bhonagiri V."/>
            <person name="Nash W."/>
            <person name="Johnson M."/>
            <person name="Thiruvilangam P."/>
            <person name="Wilson R."/>
        </authorList>
    </citation>
    <scope>NUCLEOTIDE SEQUENCE [LARGE SCALE GENOMIC DNA]</scope>
    <source>
        <strain>ATCC BAA-731 / CDC346-86 / RSK2980</strain>
    </source>
</reference>
<dbReference type="EMBL" id="CP000880">
    <property type="protein sequence ID" value="ABX20957.1"/>
    <property type="molecule type" value="Genomic_DNA"/>
</dbReference>
<dbReference type="SMR" id="A9MND4"/>
<dbReference type="STRING" id="41514.SARI_01049"/>
<dbReference type="KEGG" id="ses:SARI_01049"/>
<dbReference type="HOGENOM" id="CLU_062974_2_2_6"/>
<dbReference type="Proteomes" id="UP000002084">
    <property type="component" value="Chromosome"/>
</dbReference>
<dbReference type="GO" id="GO:0005829">
    <property type="term" value="C:cytosol"/>
    <property type="evidence" value="ECO:0007669"/>
    <property type="project" value="TreeGrafter"/>
</dbReference>
<dbReference type="GO" id="GO:0003677">
    <property type="term" value="F:DNA binding"/>
    <property type="evidence" value="ECO:0007669"/>
    <property type="project" value="UniProtKB-UniRule"/>
</dbReference>
<dbReference type="GO" id="GO:0006355">
    <property type="term" value="P:regulation of DNA-templated transcription"/>
    <property type="evidence" value="ECO:0007669"/>
    <property type="project" value="UniProtKB-UniRule"/>
</dbReference>
<dbReference type="FunFam" id="1.10.10.200:FF:000001">
    <property type="entry name" value="Probable transcriptional regulatory protein YebC"/>
    <property type="match status" value="1"/>
</dbReference>
<dbReference type="FunFam" id="3.30.70.980:FF:000002">
    <property type="entry name" value="Probable transcriptional regulatory protein YebC"/>
    <property type="match status" value="1"/>
</dbReference>
<dbReference type="Gene3D" id="1.10.10.200">
    <property type="match status" value="1"/>
</dbReference>
<dbReference type="Gene3D" id="3.30.70.980">
    <property type="match status" value="2"/>
</dbReference>
<dbReference type="HAMAP" id="MF_00693">
    <property type="entry name" value="Transcrip_reg_TACO1"/>
    <property type="match status" value="1"/>
</dbReference>
<dbReference type="InterPro" id="IPR017856">
    <property type="entry name" value="Integrase-like_N"/>
</dbReference>
<dbReference type="InterPro" id="IPR048300">
    <property type="entry name" value="TACO1_YebC-like_2nd/3rd_dom"/>
</dbReference>
<dbReference type="InterPro" id="IPR049083">
    <property type="entry name" value="TACO1_YebC_N"/>
</dbReference>
<dbReference type="InterPro" id="IPR002876">
    <property type="entry name" value="Transcrip_reg_TACO1-like"/>
</dbReference>
<dbReference type="InterPro" id="IPR026564">
    <property type="entry name" value="Transcrip_reg_TACO1-like_dom3"/>
</dbReference>
<dbReference type="InterPro" id="IPR029072">
    <property type="entry name" value="YebC-like"/>
</dbReference>
<dbReference type="NCBIfam" id="NF001030">
    <property type="entry name" value="PRK00110.1"/>
    <property type="match status" value="1"/>
</dbReference>
<dbReference type="NCBIfam" id="NF009044">
    <property type="entry name" value="PRK12378.1"/>
    <property type="match status" value="1"/>
</dbReference>
<dbReference type="NCBIfam" id="TIGR01033">
    <property type="entry name" value="YebC/PmpR family DNA-binding transcriptional regulator"/>
    <property type="match status" value="1"/>
</dbReference>
<dbReference type="PANTHER" id="PTHR12532:SF6">
    <property type="entry name" value="TRANSCRIPTIONAL REGULATORY PROTEIN YEBC-RELATED"/>
    <property type="match status" value="1"/>
</dbReference>
<dbReference type="PANTHER" id="PTHR12532">
    <property type="entry name" value="TRANSLATIONAL ACTIVATOR OF CYTOCHROME C OXIDASE 1"/>
    <property type="match status" value="1"/>
</dbReference>
<dbReference type="Pfam" id="PF20772">
    <property type="entry name" value="TACO1_YebC_N"/>
    <property type="match status" value="1"/>
</dbReference>
<dbReference type="Pfam" id="PF01709">
    <property type="entry name" value="Transcrip_reg"/>
    <property type="match status" value="1"/>
</dbReference>
<dbReference type="SUPFAM" id="SSF75625">
    <property type="entry name" value="YebC-like"/>
    <property type="match status" value="1"/>
</dbReference>
<name>YEBC_SALAR</name>
<protein>
    <recommendedName>
        <fullName evidence="1">Probable transcriptional regulatory protein YebC</fullName>
    </recommendedName>
</protein>
<proteinExistence type="inferred from homology"/>